<gene>
    <name evidence="1" type="primary">MT-ND3</name>
    <name type="synonym">MTND3</name>
    <name type="synonym">NADH3</name>
    <name type="synonym">ND3</name>
</gene>
<dbReference type="EC" id="7.1.1.2" evidence="1"/>
<dbReference type="EMBL" id="U40246">
    <property type="protein sequence ID" value="AAB17915.1"/>
    <property type="molecule type" value="Genomic_DNA"/>
</dbReference>
<dbReference type="SMR" id="Q95881"/>
<dbReference type="GO" id="GO:0005743">
    <property type="term" value="C:mitochondrial inner membrane"/>
    <property type="evidence" value="ECO:0000250"/>
    <property type="project" value="UniProtKB"/>
</dbReference>
<dbReference type="GO" id="GO:0030964">
    <property type="term" value="C:NADH dehydrogenase complex"/>
    <property type="evidence" value="ECO:0007669"/>
    <property type="project" value="TreeGrafter"/>
</dbReference>
<dbReference type="GO" id="GO:0008137">
    <property type="term" value="F:NADH dehydrogenase (ubiquinone) activity"/>
    <property type="evidence" value="ECO:0000250"/>
    <property type="project" value="UniProtKB"/>
</dbReference>
<dbReference type="GO" id="GO:0006120">
    <property type="term" value="P:mitochondrial electron transport, NADH to ubiquinone"/>
    <property type="evidence" value="ECO:0000250"/>
    <property type="project" value="UniProtKB"/>
</dbReference>
<dbReference type="FunFam" id="1.20.58.1610:FF:000004">
    <property type="entry name" value="NADH-quinone oxidoreductase subunit A"/>
    <property type="match status" value="1"/>
</dbReference>
<dbReference type="Gene3D" id="1.20.58.1610">
    <property type="entry name" value="NADH:ubiquinone/plastoquinone oxidoreductase, chain 3"/>
    <property type="match status" value="1"/>
</dbReference>
<dbReference type="InterPro" id="IPR000440">
    <property type="entry name" value="NADH_UbQ/plastoQ_OxRdtase_su3"/>
</dbReference>
<dbReference type="InterPro" id="IPR038430">
    <property type="entry name" value="NDAH_ubi_oxred_su3_sf"/>
</dbReference>
<dbReference type="PANTHER" id="PTHR11058">
    <property type="entry name" value="NADH-UBIQUINONE OXIDOREDUCTASE CHAIN 3"/>
    <property type="match status" value="1"/>
</dbReference>
<dbReference type="PANTHER" id="PTHR11058:SF9">
    <property type="entry name" value="NADH-UBIQUINONE OXIDOREDUCTASE CHAIN 3"/>
    <property type="match status" value="1"/>
</dbReference>
<dbReference type="Pfam" id="PF00507">
    <property type="entry name" value="Oxidored_q4"/>
    <property type="match status" value="1"/>
</dbReference>
<keyword id="KW-0249">Electron transport</keyword>
<keyword id="KW-0472">Membrane</keyword>
<keyword id="KW-0496">Mitochondrion</keyword>
<keyword id="KW-0999">Mitochondrion inner membrane</keyword>
<keyword id="KW-0520">NAD</keyword>
<keyword id="KW-0679">Respiratory chain</keyword>
<keyword id="KW-1278">Translocase</keyword>
<keyword id="KW-0812">Transmembrane</keyword>
<keyword id="KW-1133">Transmembrane helix</keyword>
<keyword id="KW-0813">Transport</keyword>
<keyword id="KW-0830">Ubiquinone</keyword>
<comment type="function">
    <text evidence="1">Core subunit of the mitochondrial membrane respiratory chain NADH dehydrogenase (Complex I) which catalyzes electron transfer from NADH through the respiratory chain, using ubiquinone as an electron acceptor. Essential for the catalytic activity of complex I.</text>
</comment>
<comment type="catalytic activity">
    <reaction evidence="1">
        <text>a ubiquinone + NADH + 5 H(+)(in) = a ubiquinol + NAD(+) + 4 H(+)(out)</text>
        <dbReference type="Rhea" id="RHEA:29091"/>
        <dbReference type="Rhea" id="RHEA-COMP:9565"/>
        <dbReference type="Rhea" id="RHEA-COMP:9566"/>
        <dbReference type="ChEBI" id="CHEBI:15378"/>
        <dbReference type="ChEBI" id="CHEBI:16389"/>
        <dbReference type="ChEBI" id="CHEBI:17976"/>
        <dbReference type="ChEBI" id="CHEBI:57540"/>
        <dbReference type="ChEBI" id="CHEBI:57945"/>
        <dbReference type="EC" id="7.1.1.2"/>
    </reaction>
</comment>
<comment type="subunit">
    <text evidence="1">Core subunit of respiratory chain NADH dehydrogenase (Complex I) which is composed of 45 different subunits. Interacts with TMEM186. Interacts with TMEM242 (By similarity).</text>
</comment>
<comment type="subcellular location">
    <subcellularLocation>
        <location evidence="2">Mitochondrion inner membrane</location>
        <topology evidence="3">Multi-pass membrane protein</topology>
    </subcellularLocation>
</comment>
<comment type="similarity">
    <text evidence="4">Belongs to the complex I subunit 3 family.</text>
</comment>
<organism>
    <name type="scientific">Peromyscus gossypinus</name>
    <name type="common">Cotton deermouse</name>
    <name type="synonym">Hesperomys gossypinus</name>
    <dbReference type="NCBI Taxonomy" id="42411"/>
    <lineage>
        <taxon>Eukaryota</taxon>
        <taxon>Metazoa</taxon>
        <taxon>Chordata</taxon>
        <taxon>Craniata</taxon>
        <taxon>Vertebrata</taxon>
        <taxon>Euteleostomi</taxon>
        <taxon>Mammalia</taxon>
        <taxon>Eutheria</taxon>
        <taxon>Euarchontoglires</taxon>
        <taxon>Glires</taxon>
        <taxon>Rodentia</taxon>
        <taxon>Myomorpha</taxon>
        <taxon>Muroidea</taxon>
        <taxon>Cricetidae</taxon>
        <taxon>Neotominae</taxon>
        <taxon>Peromyscus</taxon>
    </lineage>
</organism>
<proteinExistence type="inferred from homology"/>
<sequence length="115" mass="13226">MNMLMALMVNITLSILLITVAFWLPQLNMYTEKANPYECGFDPMSSARLPFSMKFFLVAITFLLYDLEIALLLPLPWAIQMYNTNTMMLTAFILVSVLALGLAYEWTQKGLEWTE</sequence>
<reference key="1">
    <citation type="submission" date="1995-11" db="EMBL/GenBank/DDBJ databases">
        <title>Mitochondrial DNA analysis of the systematic relationships within the Peromyscus maniculatus species group.</title>
        <authorList>
            <person name="Hogan K.M."/>
            <person name="Davis S.K."/>
            <person name="Greenbaum I.F."/>
        </authorList>
    </citation>
    <scope>NUCLEOTIDE SEQUENCE [GENOMIC DNA]</scope>
</reference>
<evidence type="ECO:0000250" key="1">
    <source>
        <dbReference type="UniProtKB" id="P03897"/>
    </source>
</evidence>
<evidence type="ECO:0000250" key="2">
    <source>
        <dbReference type="UniProtKB" id="P03898"/>
    </source>
</evidence>
<evidence type="ECO:0000255" key="3"/>
<evidence type="ECO:0000305" key="4"/>
<protein>
    <recommendedName>
        <fullName evidence="1">NADH-ubiquinone oxidoreductase chain 3</fullName>
        <ecNumber evidence="1">7.1.1.2</ecNumber>
    </recommendedName>
    <alternativeName>
        <fullName>NADH dehydrogenase subunit 3</fullName>
    </alternativeName>
</protein>
<accession>Q95881</accession>
<feature type="chain" id="PRO_0000117795" description="NADH-ubiquinone oxidoreductase chain 3">
    <location>
        <begin position="1"/>
        <end position="115"/>
    </location>
</feature>
<feature type="transmembrane region" description="Helical" evidence="3">
    <location>
        <begin position="4"/>
        <end position="24"/>
    </location>
</feature>
<feature type="transmembrane region" description="Helical" evidence="3">
    <location>
        <begin position="55"/>
        <end position="75"/>
    </location>
</feature>
<feature type="transmembrane region" description="Helical" evidence="3">
    <location>
        <begin position="86"/>
        <end position="106"/>
    </location>
</feature>
<name>NU3M_PERGO</name>
<geneLocation type="mitochondrion"/>